<evidence type="ECO:0000250" key="1"/>
<evidence type="ECO:0000255" key="2"/>
<evidence type="ECO:0000305" key="3"/>
<sequence length="66" mass="7068">MKKIVFVLVLMLSSFGTFGQETASRQFGDAFSTPIAAEVNKKACDTELPPSDWCCEVCCNPACAGC</sequence>
<reference key="1">
    <citation type="submission" date="1992-11" db="EMBL/GenBank/DDBJ databases">
        <authorList>
            <person name="Ibrahim A."/>
            <person name="Liesack W."/>
            <person name="Stackebrandt E."/>
        </authorList>
    </citation>
    <scope>NUCLEOTIDE SEQUENCE [GENOMIC DNA]</scope>
    <source>
        <strain>IP490 / Serotype O:12,25</strain>
    </source>
</reference>
<organism>
    <name type="scientific">Yersinia kristensenii</name>
    <dbReference type="NCBI Taxonomy" id="28152"/>
    <lineage>
        <taxon>Bacteria</taxon>
        <taxon>Pseudomonadati</taxon>
        <taxon>Pseudomonadota</taxon>
        <taxon>Gammaproteobacteria</taxon>
        <taxon>Enterobacterales</taxon>
        <taxon>Yersiniaceae</taxon>
        <taxon>Yersinia</taxon>
    </lineage>
</organism>
<gene>
    <name type="primary">yst</name>
</gene>
<protein>
    <recommendedName>
        <fullName>Heat-stable enterotoxin</fullName>
    </recommendedName>
</protein>
<dbReference type="EMBL" id="X69218">
    <property type="protein sequence ID" value="CAA49152.1"/>
    <property type="molecule type" value="Genomic_DNA"/>
</dbReference>
<dbReference type="PIR" id="S31652">
    <property type="entry name" value="S31652"/>
</dbReference>
<dbReference type="STRING" id="28152.CH54_165"/>
<dbReference type="KEGG" id="ykr:CH54_165"/>
<dbReference type="GO" id="GO:0005615">
    <property type="term" value="C:extracellular space"/>
    <property type="evidence" value="ECO:0007669"/>
    <property type="project" value="InterPro"/>
</dbReference>
<dbReference type="GO" id="GO:0090729">
    <property type="term" value="F:toxin activity"/>
    <property type="evidence" value="ECO:0007669"/>
    <property type="project" value="UniProtKB-KW"/>
</dbReference>
<dbReference type="InterPro" id="IPR019806">
    <property type="entry name" value="Heat-stable_enterotox_CS"/>
</dbReference>
<dbReference type="InterPro" id="IPR001489">
    <property type="entry name" value="Heat-stable_enterotox_STa"/>
</dbReference>
<dbReference type="Pfam" id="PF02048">
    <property type="entry name" value="Enterotoxin_ST"/>
    <property type="match status" value="1"/>
</dbReference>
<dbReference type="PROSITE" id="PS00273">
    <property type="entry name" value="ENTEROTOXIN_H_STABLE"/>
    <property type="match status" value="1"/>
</dbReference>
<accession>P31518</accession>
<proteinExistence type="inferred from homology"/>
<name>HST_YERKR</name>
<feature type="signal peptide" evidence="2">
    <location>
        <begin position="1"/>
        <end position="19"/>
    </location>
</feature>
<feature type="propeptide" id="PRO_0000035142">
    <location>
        <begin position="20"/>
        <end position="50"/>
    </location>
</feature>
<feature type="peptide" id="PRO_0000035143" description="Heat-stable enterotoxin" evidence="1">
    <location>
        <begin position="51"/>
        <end position="66"/>
    </location>
</feature>
<feature type="disulfide bond" evidence="1">
    <location>
        <begin position="54"/>
        <end position="59"/>
    </location>
</feature>
<feature type="disulfide bond" evidence="1">
    <location>
        <begin position="55"/>
        <end position="63"/>
    </location>
</feature>
<feature type="disulfide bond" evidence="1">
    <location>
        <begin position="58"/>
        <end position="66"/>
    </location>
</feature>
<keyword id="KW-1015">Disulfide bond</keyword>
<keyword id="KW-0260">Enterotoxin</keyword>
<keyword id="KW-0964">Secreted</keyword>
<keyword id="KW-0732">Signal</keyword>
<keyword id="KW-0800">Toxin</keyword>
<keyword id="KW-0843">Virulence</keyword>
<comment type="function">
    <text evidence="1">Toxin which activates the particulate form of guanylate cyclase and increases cyclic GMP levels within the host intestinal epithelial cells.</text>
</comment>
<comment type="subcellular location">
    <subcellularLocation>
        <location>Secreted</location>
    </subcellularLocation>
</comment>
<comment type="similarity">
    <text evidence="3">Belongs to the heat-stable enterotoxin family.</text>
</comment>